<organism>
    <name type="scientific">Penicillium ochrochloron</name>
    <dbReference type="NCBI Taxonomy" id="69780"/>
    <lineage>
        <taxon>Eukaryota</taxon>
        <taxon>Fungi</taxon>
        <taxon>Dikarya</taxon>
        <taxon>Ascomycota</taxon>
        <taxon>Pezizomycotina</taxon>
        <taxon>Eurotiomycetes</taxon>
        <taxon>Eurotiomycetidae</taxon>
        <taxon>Eurotiales</taxon>
        <taxon>Aspergillaceae</taxon>
        <taxon>Penicillium</taxon>
    </lineage>
</organism>
<name>PTMI_PENOH</name>
<comment type="function">
    <text evidence="1">Part of the gene cluster that mediates the biosynthesis of the indole diterpenes penitrems (PubMed:25831977). The geranylgeranyl diphosphate (GGPP) synthase ptmG catalyzes the first step in penitrem biosynthesis via conversion of farnesyl pyrophosphate and isopentyl pyrophosphate into geranylgeranyl pyrophosphate (GGPP) (PubMed:25831977). Condensation of indole-3-glycerol phosphate with GGPP by the prenyl transferase ptmC then forms 3-geranylgeranylindole (3-GGI) (PubMed:25831977). Epoxidation by the FAD-dependent monooxygenase ptmM leads to a epoxidized-GGI that is substrate of the terpene cyclase ptmB for cyclization to yield paspaline (PubMed:25831977). Paspaline is subsequently converted to 13-desoxypaxilline by the cytochrome P450 monooxygenase ptmP, the latter being then converted to paxilline by the cytochrome P450 monooxygenase ptmQ (PubMed:25831977). Paxilline is converted to beta-paxitriol via C-10 ketoreduction by the short-chain dehydrogenase ptmH which can be monoprenylated at the C-20 by the indole diterpene prenyltransferase ptmD (PubMed:25831977). A two-step elimination (acetylation and elimination) process performed by the O-acetyltransferase ptmV and ptmI leads to the production of the prenylated form of penijanthine (PubMed:25831977). The FAD-linked oxidoreductase ptmO then converts the prenylated form of penijanthine into PC-M5 which is in turn transformed into PC-M4 by the aromatic dimethylallyltransferase ptmE (PubMed:25831977). Five sequential oxidative transformations performed by the cytochrome P450 monooxygenases ptmK, ptmU, ptmL, ptmN and ptmJ yield the various penitrem compounds. PtmK, ptmU and ptmM are involved in the formation of the key bicyclic ring of penitrem C via the formation of the intermediates secopenitrem D and penitrem D. PtmL catalyzes the epoxidation of penitrem D and C to yield penitrem B and F, respectively. PtmJ catalyzes the last benzylic hydroxylation to convert penitrem B to prenitrem E and penitrem F to penitrem A (PubMed:25831977).</text>
</comment>
<comment type="pathway">
    <text evidence="1">Secondary metabolite biosynthesis.</text>
</comment>
<dbReference type="EMBL" id="LC027936">
    <property type="protein sequence ID" value="BAU61553.1"/>
    <property type="molecule type" value="Genomic_DNA"/>
</dbReference>
<dbReference type="SMR" id="A0A140JWS6"/>
<dbReference type="CDD" id="cd07812">
    <property type="entry name" value="SRPBCC"/>
    <property type="match status" value="1"/>
</dbReference>
<dbReference type="Gene3D" id="3.30.530.20">
    <property type="match status" value="1"/>
</dbReference>
<dbReference type="InterPro" id="IPR023393">
    <property type="entry name" value="START-like_dom_sf"/>
</dbReference>
<dbReference type="SUPFAM" id="SSF55961">
    <property type="entry name" value="Bet v1-like"/>
    <property type="match status" value="1"/>
</dbReference>
<evidence type="ECO:0000269" key="1">
    <source>
    </source>
</evidence>
<evidence type="ECO:0000303" key="2">
    <source>
    </source>
</evidence>
<feature type="chain" id="PRO_0000446598" description="Penitrem biosynthesis cluster 1 protein I">
    <location>
        <begin position="1"/>
        <end position="153"/>
    </location>
</feature>
<accession>A0A140JWS6</accession>
<reference key="1">
    <citation type="journal article" date="2015" name="Angew. Chem. Int. Ed.">
        <title>Reconstitution of biosynthetic machinery for the synthesis of the highly elaborated indole diterpene penitrem.</title>
        <authorList>
            <person name="Liu C."/>
            <person name="Tagami K."/>
            <person name="Minami A."/>
            <person name="Matsumoto T."/>
            <person name="Frisvad J.C."/>
            <person name="Suzuki H."/>
            <person name="Ishikawa J."/>
            <person name="Gomi K."/>
            <person name="Oikawa H."/>
        </authorList>
    </citation>
    <scope>NUCLEOTIDE SEQUENCE [GENOMIC DNA]</scope>
    <scope>IDENTIFICATION</scope>
    <scope>FUNCTION</scope>
    <scope>PATHWAY</scope>
    <source>
        <strain>ATCC 90288 / AK-40</strain>
    </source>
</reference>
<protein>
    <recommendedName>
        <fullName evidence="2">Penitrem biosynthesis cluster 1 protein I</fullName>
    </recommendedName>
</protein>
<proteinExistence type="predicted"/>
<gene>
    <name evidence="2" type="primary">ptmI</name>
</gene>
<sequence>MSSFKSQCEIIIDKPAHVVYDFVTTVSNWIGIHPACKGIEGDDGLDKEATVGLRFTETIDVRGWVFQCHWEVRKMVKDQYFEFSLPTDFILPPVYNTIITYIFDPIGDNKTRFIRTMINCTNADATPEQKADFADTDMHTDYLNAVKARLEMS</sequence>